<accession>Q9ZSY9</accession>
<dbReference type="EC" id="4.2.99.-" evidence="9"/>
<dbReference type="EMBL" id="AF087932">
    <property type="protein sequence ID" value="AAC69871.1"/>
    <property type="molecule type" value="mRNA"/>
</dbReference>
<dbReference type="PIR" id="T51860">
    <property type="entry name" value="T51860"/>
</dbReference>
<dbReference type="SMR" id="Q9ZSY9"/>
<dbReference type="ExpressionAtlas" id="Q9ZSY9">
    <property type="expression patterns" value="baseline and differential"/>
</dbReference>
<dbReference type="GO" id="GO:0009507">
    <property type="term" value="C:chloroplast"/>
    <property type="evidence" value="ECO:0007669"/>
    <property type="project" value="UniProtKB-SubCell"/>
</dbReference>
<dbReference type="GO" id="GO:0020037">
    <property type="term" value="F:heme binding"/>
    <property type="evidence" value="ECO:0007669"/>
    <property type="project" value="InterPro"/>
</dbReference>
<dbReference type="GO" id="GO:0005506">
    <property type="term" value="F:iron ion binding"/>
    <property type="evidence" value="ECO:0007669"/>
    <property type="project" value="InterPro"/>
</dbReference>
<dbReference type="GO" id="GO:0016829">
    <property type="term" value="F:lyase activity"/>
    <property type="evidence" value="ECO:0000314"/>
    <property type="project" value="UniProtKB"/>
</dbReference>
<dbReference type="GO" id="GO:0004497">
    <property type="term" value="F:monooxygenase activity"/>
    <property type="evidence" value="ECO:0007669"/>
    <property type="project" value="InterPro"/>
</dbReference>
<dbReference type="GO" id="GO:0016705">
    <property type="term" value="F:oxidoreductase activity, acting on paired donors, with incorporation or reduction of molecular oxygen"/>
    <property type="evidence" value="ECO:0007669"/>
    <property type="project" value="InterPro"/>
</dbReference>
<dbReference type="GO" id="GO:0010597">
    <property type="term" value="P:green leaf volatile biosynthetic process"/>
    <property type="evidence" value="ECO:0000314"/>
    <property type="project" value="UniProtKB"/>
</dbReference>
<dbReference type="CDD" id="cd11071">
    <property type="entry name" value="CYP74"/>
    <property type="match status" value="1"/>
</dbReference>
<dbReference type="FunFam" id="1.10.630.10:FF:000024">
    <property type="entry name" value="Allene oxide synthase, chloroplastic"/>
    <property type="match status" value="1"/>
</dbReference>
<dbReference type="Gene3D" id="1.10.630.10">
    <property type="entry name" value="Cytochrome P450"/>
    <property type="match status" value="1"/>
</dbReference>
<dbReference type="InterPro" id="IPR001128">
    <property type="entry name" value="Cyt_P450"/>
</dbReference>
<dbReference type="InterPro" id="IPR002403">
    <property type="entry name" value="Cyt_P450_E_grp-IV"/>
</dbReference>
<dbReference type="InterPro" id="IPR036396">
    <property type="entry name" value="Cyt_P450_sf"/>
</dbReference>
<dbReference type="PANTHER" id="PTHR24286">
    <property type="entry name" value="CYTOCHROME P450 26"/>
    <property type="match status" value="1"/>
</dbReference>
<dbReference type="PANTHER" id="PTHR24286:SF49">
    <property type="entry name" value="INACTIVE LINOLENATE HYDROPEROXIDE LYASE-RELATED"/>
    <property type="match status" value="1"/>
</dbReference>
<dbReference type="Pfam" id="PF00067">
    <property type="entry name" value="p450"/>
    <property type="match status" value="1"/>
</dbReference>
<dbReference type="PRINTS" id="PR00465">
    <property type="entry name" value="EP450IV"/>
</dbReference>
<dbReference type="SUPFAM" id="SSF48264">
    <property type="entry name" value="Cytochrome P450"/>
    <property type="match status" value="1"/>
</dbReference>
<protein>
    <recommendedName>
        <fullName evidence="9">Linolenate hydroperoxide lyase, chloroplastic</fullName>
        <ecNumber evidence="9">4.2.99.-</ecNumber>
    </recommendedName>
    <alternativeName>
        <fullName evidence="8">Cytochrome P450 74B2</fullName>
    </alternativeName>
    <alternativeName>
        <fullName evidence="7">Hydroperoxide lyase 1</fullName>
    </alternativeName>
</protein>
<reference key="1">
    <citation type="journal article" date="1998" name="Plant Physiol.">
        <title>Molecular characterization of an Arabidopsis gene encoding hydroperoxide lyase, a cytochrome P-450 that is wound inducible.</title>
        <authorList>
            <person name="Bate N.J."/>
            <person name="Sivasankar S."/>
            <person name="Moxon C."/>
            <person name="Riley J.M."/>
            <person name="Thompson J.E."/>
            <person name="Rothstein S.J."/>
        </authorList>
    </citation>
    <scope>NUCLEOTIDE SEQUENCE [MRNA]</scope>
    <scope>FUNCTION</scope>
    <scope>CATALYTIC ACTIVITY</scope>
    <scope>TISSUE SPECIFICITY</scope>
    <scope>INDUCTION BY WOUNDING</scope>
</reference>
<reference key="2">
    <citation type="journal article" date="2005" name="Plant Physiol.">
        <title>Variations in CYP74B2 (hydroperoxide lyase) gene expression differentially affect hexenal signaling in the Columbia and Landsberg erecta ecotypes of Arabidopsis.</title>
        <authorList>
            <person name="Duan H."/>
            <person name="Huang M.Y."/>
            <person name="Palacio K."/>
            <person name="Schuler M.A."/>
        </authorList>
    </citation>
    <scope>FUNCTION</scope>
    <scope>CATALYTIC ACTIVITY</scope>
    <scope>TISSUE SPECIFICITY</scope>
    <scope>DISRUPTION PHENOTYPE</scope>
    <source>
        <strain>cv. Landsberg erecta</strain>
        <strain>cv. Wassilewskija</strain>
    </source>
</reference>
<reference key="3">
    <citation type="journal article" date="2007" name="Plant J.">
        <title>Characterization of a BAHD acyltransferase responsible for producing the green leaf volatile (Z)-3-hexen-1-yl acetate in Arabidopsis thaliana.</title>
        <authorList>
            <person name="D'Auria J.C."/>
            <person name="Pichersky E."/>
            <person name="Schaub A."/>
            <person name="Hansel A."/>
            <person name="Gershenzon J."/>
        </authorList>
    </citation>
    <scope>INDUCTION BY WOUNDING</scope>
    <source>
        <strain>cv. Landsberg erecta</strain>
    </source>
</reference>
<reference key="4">
    <citation type="journal article" date="2013" name="Front. Plant Sci.">
        <title>E-2-hexenal promotes susceptibility to Pseudomonas syringae by activating jasmonic acid pathways in Arabidopsis.</title>
        <authorList>
            <person name="Scala A."/>
            <person name="Mirabella R."/>
            <person name="Mugo C."/>
            <person name="Matsui K."/>
            <person name="Haring M.A."/>
            <person name="Schuurink R.C."/>
        </authorList>
    </citation>
    <scope>FUNCTION</scope>
    <scope>DISRUPTION PHENOTYPE</scope>
    <source>
        <strain>cv. Landsberg erecta</strain>
    </source>
</reference>
<sequence length="492" mass="54876">MLLRTMAATSPRPPPSTSLTSQQPPSPPSQLPLRTMPGSYGWPLVGPLSDRLDYFWFQGPDKFFRTRAEKYKSTVFRTNIPPTFPFFGNVNPNIVAVLDVKSFSHLFDMDLVDKRDVLIGDFRPSLGFYGGVCVGVNLDTTEPKHAKIKGFAMETLKRSSKVWLQELRSNLNIFWGTIESEISKNGAASYIFPLQRCIFSFLCASLAGVDASVSPDIAENGWKTINTWLALQVIPTAKLGVVPQPLEEILLHTWPYPSLLIAGNYKKLYNFIDENAGDCLRLGQEEFRLTRDEAIQNLLFVLGFNAYGGFSVFLPSLIGRITGDNSGLQERIRTEVRRVCGSGSDLNFKTVNEMELVKSVVYETLRFNPPVPLQFARARKDFQISSHDAVFEVKKGELLCGYQPLVMRDANVFDEPEEFKPDRYVGETGSELLNYLYWSNGPQTGTPSASNKQCAAKDIVTLTASLLVADLFLRYDTITGDSGSIKAVVKAK</sequence>
<gene>
    <name evidence="8" type="primary">CYP74B2</name>
    <name evidence="7" type="synonym">HPL1</name>
</gene>
<keyword id="KW-0150">Chloroplast</keyword>
<keyword id="KW-0349">Heme</keyword>
<keyword id="KW-0408">Iron</keyword>
<keyword id="KW-0456">Lyase</keyword>
<keyword id="KW-0479">Metal-binding</keyword>
<keyword id="KW-0934">Plastid</keyword>
<keyword id="KW-0809">Transit peptide</keyword>
<feature type="transit peptide" description="Chloroplast" evidence="2">
    <location>
        <begin position="1"/>
        <end position="34"/>
    </location>
</feature>
<feature type="chain" id="PRO_0000431453" description="Linolenate hydroperoxide lyase, chloroplastic" evidence="2">
    <location>
        <begin position="35"/>
        <end position="492"/>
    </location>
</feature>
<feature type="region of interest" description="Disordered" evidence="3">
    <location>
        <begin position="1"/>
        <end position="33"/>
    </location>
</feature>
<feature type="binding site" description="axial binding residue" evidence="1">
    <location>
        <position position="454"/>
    </location>
    <ligand>
        <name>heme</name>
        <dbReference type="ChEBI" id="CHEBI:30413"/>
    </ligand>
    <ligandPart>
        <name>Fe</name>
        <dbReference type="ChEBI" id="CHEBI:18248"/>
    </ligandPart>
</feature>
<proteinExistence type="evidence at protein level"/>
<evidence type="ECO:0000250" key="1">
    <source>
        <dbReference type="UniProtKB" id="Q96242"/>
    </source>
</evidence>
<evidence type="ECO:0000255" key="2"/>
<evidence type="ECO:0000256" key="3">
    <source>
        <dbReference type="SAM" id="MobiDB-lite"/>
    </source>
</evidence>
<evidence type="ECO:0000269" key="4">
    <source>
    </source>
</evidence>
<evidence type="ECO:0000269" key="5">
    <source>
    </source>
</evidence>
<evidence type="ECO:0000269" key="6">
    <source>
    </source>
</evidence>
<evidence type="ECO:0000303" key="7">
    <source>
    </source>
</evidence>
<evidence type="ECO:0000305" key="8"/>
<evidence type="ECO:0000305" key="9">
    <source>
    </source>
</evidence>
<name>C74B2_ARATH</name>
<organism>
    <name type="scientific">Arabidopsis thaliana</name>
    <name type="common">Mouse-ear cress</name>
    <dbReference type="NCBI Taxonomy" id="3702"/>
    <lineage>
        <taxon>Eukaryota</taxon>
        <taxon>Viridiplantae</taxon>
        <taxon>Streptophyta</taxon>
        <taxon>Embryophyta</taxon>
        <taxon>Tracheophyta</taxon>
        <taxon>Spermatophyta</taxon>
        <taxon>Magnoliopsida</taxon>
        <taxon>eudicotyledons</taxon>
        <taxon>Gunneridae</taxon>
        <taxon>Pentapetalae</taxon>
        <taxon>rosids</taxon>
        <taxon>malvids</taxon>
        <taxon>Brassicales</taxon>
        <taxon>Brassicaceae</taxon>
        <taxon>Camelineae</taxon>
        <taxon>Arabidopsis</taxon>
    </lineage>
</organism>
<comment type="function">
    <text evidence="4 6">Catalyzes the conversion of (9Z,11E,15Z)-(13S)-hydroperoxyoctadeca-9,11,15-trienoate to (9Z)-12-oxo-dodec-9-enoate and cis-3-hexenal. Possesses low activity toward (9Z,11E)-(13S)-13-hydroperoxyoctadeca-9,11-dienoate (PubMed:16258015, PubMed:9701595). Required for the synthesis of the green leaf volatiles (GLVs) hexanal and trans-2-hexenal (PubMed:16258015).</text>
</comment>
<comment type="cofactor">
    <cofactor evidence="1">
        <name>heme</name>
        <dbReference type="ChEBI" id="CHEBI:30413"/>
    </cofactor>
</comment>
<comment type="subcellular location">
    <subcellularLocation>
        <location evidence="2">Plastid</location>
        <location evidence="2">Chloroplast</location>
    </subcellularLocation>
</comment>
<comment type="tissue specificity">
    <text evidence="4 6">Expressed in roots, leaves, flowers and siliques.</text>
</comment>
<comment type="induction">
    <text evidence="5 6">By wounding.</text>
</comment>
<comment type="disruption phenotype">
    <text evidence="4">No visible phenotype under normal growth conditions, but plants lacking HPL1 cannot synthesize the green leaf volatiles (GLVs) hexanal and trans-2-hexenal.</text>
</comment>
<comment type="similarity">
    <text evidence="8">Belongs to the cytochrome P450 family.</text>
</comment>
<comment type="caution">
    <text evidence="4">In cv. Columbia, CYP74B2 (AC B3LF83) DNA sequence contains a 10-bp deletion that leads to a shorter N-terminus compared to typical other CYP74B subfamily members, and CYP74B2 is thought to be a non-functional enzyme. Functional alleles, with full N-terminus are found in cv. Landsberg erecta and cv. Wassilewskija (AC Q9ZSY9).</text>
</comment>